<reference key="1">
    <citation type="journal article" date="2006" name="Appl. Environ. Microbiol.">
        <title>Genome sequence of the chemolithoautotrophic nitrite-oxidizing bacterium Nitrobacter winogradskyi Nb-255.</title>
        <authorList>
            <person name="Starkenburg S.R."/>
            <person name="Chain P.S.G."/>
            <person name="Sayavedra-Soto L.A."/>
            <person name="Hauser L."/>
            <person name="Land M.L."/>
            <person name="Larimer F.W."/>
            <person name="Malfatti S.A."/>
            <person name="Klotz M.G."/>
            <person name="Bottomley P.J."/>
            <person name="Arp D.J."/>
            <person name="Hickey W.J."/>
        </authorList>
    </citation>
    <scope>NUCLEOTIDE SEQUENCE [LARGE SCALE GENOMIC DNA]</scope>
    <source>
        <strain>ATCC 25391 / DSM 10237 / CIP 104748 / NCIMB 11846 / Nb-255</strain>
    </source>
</reference>
<dbReference type="EMBL" id="CP000115">
    <property type="protein sequence ID" value="ABA04622.1"/>
    <property type="molecule type" value="Genomic_DNA"/>
</dbReference>
<dbReference type="RefSeq" id="WP_011314639.1">
    <property type="nucleotide sequence ID" value="NC_007406.1"/>
</dbReference>
<dbReference type="SMR" id="Q3SSW9"/>
<dbReference type="STRING" id="323098.Nwi_1361"/>
<dbReference type="KEGG" id="nwi:Nwi_1361"/>
<dbReference type="eggNOG" id="COG0480">
    <property type="taxonomic scope" value="Bacteria"/>
</dbReference>
<dbReference type="HOGENOM" id="CLU_002794_4_1_5"/>
<dbReference type="OrthoDB" id="9802948at2"/>
<dbReference type="Proteomes" id="UP000002531">
    <property type="component" value="Chromosome"/>
</dbReference>
<dbReference type="GO" id="GO:0005737">
    <property type="term" value="C:cytoplasm"/>
    <property type="evidence" value="ECO:0007669"/>
    <property type="project" value="UniProtKB-SubCell"/>
</dbReference>
<dbReference type="GO" id="GO:0005525">
    <property type="term" value="F:GTP binding"/>
    <property type="evidence" value="ECO:0007669"/>
    <property type="project" value="UniProtKB-UniRule"/>
</dbReference>
<dbReference type="GO" id="GO:0003924">
    <property type="term" value="F:GTPase activity"/>
    <property type="evidence" value="ECO:0007669"/>
    <property type="project" value="InterPro"/>
</dbReference>
<dbReference type="GO" id="GO:0097216">
    <property type="term" value="F:guanosine tetraphosphate binding"/>
    <property type="evidence" value="ECO:0007669"/>
    <property type="project" value="UniProtKB-ARBA"/>
</dbReference>
<dbReference type="GO" id="GO:0003746">
    <property type="term" value="F:translation elongation factor activity"/>
    <property type="evidence" value="ECO:0007669"/>
    <property type="project" value="UniProtKB-UniRule"/>
</dbReference>
<dbReference type="GO" id="GO:0032790">
    <property type="term" value="P:ribosome disassembly"/>
    <property type="evidence" value="ECO:0007669"/>
    <property type="project" value="TreeGrafter"/>
</dbReference>
<dbReference type="CDD" id="cd01886">
    <property type="entry name" value="EF-G"/>
    <property type="match status" value="1"/>
</dbReference>
<dbReference type="CDD" id="cd16262">
    <property type="entry name" value="EFG_III"/>
    <property type="match status" value="1"/>
</dbReference>
<dbReference type="CDD" id="cd01434">
    <property type="entry name" value="EFG_mtEFG1_IV"/>
    <property type="match status" value="1"/>
</dbReference>
<dbReference type="CDD" id="cd03713">
    <property type="entry name" value="EFG_mtEFG_C"/>
    <property type="match status" value="1"/>
</dbReference>
<dbReference type="CDD" id="cd04088">
    <property type="entry name" value="EFG_mtEFG_II"/>
    <property type="match status" value="1"/>
</dbReference>
<dbReference type="FunFam" id="2.40.30.10:FF:000006">
    <property type="entry name" value="Elongation factor G"/>
    <property type="match status" value="1"/>
</dbReference>
<dbReference type="FunFam" id="3.30.230.10:FF:000003">
    <property type="entry name" value="Elongation factor G"/>
    <property type="match status" value="1"/>
</dbReference>
<dbReference type="FunFam" id="3.30.70.240:FF:000001">
    <property type="entry name" value="Elongation factor G"/>
    <property type="match status" value="1"/>
</dbReference>
<dbReference type="FunFam" id="3.30.70.870:FF:000001">
    <property type="entry name" value="Elongation factor G"/>
    <property type="match status" value="1"/>
</dbReference>
<dbReference type="FunFam" id="3.40.50.300:FF:000029">
    <property type="entry name" value="Elongation factor G"/>
    <property type="match status" value="1"/>
</dbReference>
<dbReference type="Gene3D" id="3.30.230.10">
    <property type="match status" value="1"/>
</dbReference>
<dbReference type="Gene3D" id="3.30.70.240">
    <property type="match status" value="1"/>
</dbReference>
<dbReference type="Gene3D" id="3.30.70.870">
    <property type="entry name" value="Elongation Factor G (Translational Gtpase), domain 3"/>
    <property type="match status" value="1"/>
</dbReference>
<dbReference type="Gene3D" id="3.40.50.300">
    <property type="entry name" value="P-loop containing nucleotide triphosphate hydrolases"/>
    <property type="match status" value="1"/>
</dbReference>
<dbReference type="Gene3D" id="2.40.30.10">
    <property type="entry name" value="Translation factors"/>
    <property type="match status" value="1"/>
</dbReference>
<dbReference type="HAMAP" id="MF_00054_B">
    <property type="entry name" value="EF_G_EF_2_B"/>
    <property type="match status" value="1"/>
</dbReference>
<dbReference type="InterPro" id="IPR041095">
    <property type="entry name" value="EFG_II"/>
</dbReference>
<dbReference type="InterPro" id="IPR009022">
    <property type="entry name" value="EFG_III"/>
</dbReference>
<dbReference type="InterPro" id="IPR035647">
    <property type="entry name" value="EFG_III/V"/>
</dbReference>
<dbReference type="InterPro" id="IPR047872">
    <property type="entry name" value="EFG_IV"/>
</dbReference>
<dbReference type="InterPro" id="IPR035649">
    <property type="entry name" value="EFG_V"/>
</dbReference>
<dbReference type="InterPro" id="IPR000640">
    <property type="entry name" value="EFG_V-like"/>
</dbReference>
<dbReference type="InterPro" id="IPR004161">
    <property type="entry name" value="EFTu-like_2"/>
</dbReference>
<dbReference type="InterPro" id="IPR031157">
    <property type="entry name" value="G_TR_CS"/>
</dbReference>
<dbReference type="InterPro" id="IPR027417">
    <property type="entry name" value="P-loop_NTPase"/>
</dbReference>
<dbReference type="InterPro" id="IPR020568">
    <property type="entry name" value="Ribosomal_Su5_D2-typ_SF"/>
</dbReference>
<dbReference type="InterPro" id="IPR014721">
    <property type="entry name" value="Ribsml_uS5_D2-typ_fold_subgr"/>
</dbReference>
<dbReference type="InterPro" id="IPR005225">
    <property type="entry name" value="Small_GTP-bd"/>
</dbReference>
<dbReference type="InterPro" id="IPR000795">
    <property type="entry name" value="T_Tr_GTP-bd_dom"/>
</dbReference>
<dbReference type="InterPro" id="IPR009000">
    <property type="entry name" value="Transl_B-barrel_sf"/>
</dbReference>
<dbReference type="InterPro" id="IPR004540">
    <property type="entry name" value="Transl_elong_EFG/EF2"/>
</dbReference>
<dbReference type="InterPro" id="IPR005517">
    <property type="entry name" value="Transl_elong_EFG/EF2_IV"/>
</dbReference>
<dbReference type="NCBIfam" id="TIGR00484">
    <property type="entry name" value="EF-G"/>
    <property type="match status" value="1"/>
</dbReference>
<dbReference type="NCBIfam" id="NF009379">
    <property type="entry name" value="PRK12740.1-3"/>
    <property type="match status" value="1"/>
</dbReference>
<dbReference type="NCBIfam" id="NF009381">
    <property type="entry name" value="PRK12740.1-5"/>
    <property type="match status" value="1"/>
</dbReference>
<dbReference type="NCBIfam" id="TIGR00231">
    <property type="entry name" value="small_GTP"/>
    <property type="match status" value="1"/>
</dbReference>
<dbReference type="PANTHER" id="PTHR43261:SF1">
    <property type="entry name" value="RIBOSOME-RELEASING FACTOR 2, MITOCHONDRIAL"/>
    <property type="match status" value="1"/>
</dbReference>
<dbReference type="PANTHER" id="PTHR43261">
    <property type="entry name" value="TRANSLATION ELONGATION FACTOR G-RELATED"/>
    <property type="match status" value="1"/>
</dbReference>
<dbReference type="Pfam" id="PF00679">
    <property type="entry name" value="EFG_C"/>
    <property type="match status" value="1"/>
</dbReference>
<dbReference type="Pfam" id="PF14492">
    <property type="entry name" value="EFG_III"/>
    <property type="match status" value="1"/>
</dbReference>
<dbReference type="Pfam" id="PF03764">
    <property type="entry name" value="EFG_IV"/>
    <property type="match status" value="1"/>
</dbReference>
<dbReference type="Pfam" id="PF00009">
    <property type="entry name" value="GTP_EFTU"/>
    <property type="match status" value="1"/>
</dbReference>
<dbReference type="Pfam" id="PF03144">
    <property type="entry name" value="GTP_EFTU_D2"/>
    <property type="match status" value="1"/>
</dbReference>
<dbReference type="PRINTS" id="PR00315">
    <property type="entry name" value="ELONGATNFCT"/>
</dbReference>
<dbReference type="SMART" id="SM00838">
    <property type="entry name" value="EFG_C"/>
    <property type="match status" value="1"/>
</dbReference>
<dbReference type="SMART" id="SM00889">
    <property type="entry name" value="EFG_IV"/>
    <property type="match status" value="1"/>
</dbReference>
<dbReference type="SUPFAM" id="SSF54980">
    <property type="entry name" value="EF-G C-terminal domain-like"/>
    <property type="match status" value="2"/>
</dbReference>
<dbReference type="SUPFAM" id="SSF52540">
    <property type="entry name" value="P-loop containing nucleoside triphosphate hydrolases"/>
    <property type="match status" value="1"/>
</dbReference>
<dbReference type="SUPFAM" id="SSF54211">
    <property type="entry name" value="Ribosomal protein S5 domain 2-like"/>
    <property type="match status" value="1"/>
</dbReference>
<dbReference type="SUPFAM" id="SSF50447">
    <property type="entry name" value="Translation proteins"/>
    <property type="match status" value="1"/>
</dbReference>
<dbReference type="PROSITE" id="PS00301">
    <property type="entry name" value="G_TR_1"/>
    <property type="match status" value="1"/>
</dbReference>
<dbReference type="PROSITE" id="PS51722">
    <property type="entry name" value="G_TR_2"/>
    <property type="match status" value="1"/>
</dbReference>
<accession>Q3SSW9</accession>
<protein>
    <recommendedName>
        <fullName evidence="1">Elongation factor G</fullName>
        <shortName evidence="1">EF-G</shortName>
    </recommendedName>
</protein>
<feature type="chain" id="PRO_0000225221" description="Elongation factor G">
    <location>
        <begin position="1"/>
        <end position="690"/>
    </location>
</feature>
<feature type="domain" description="tr-type G">
    <location>
        <begin position="8"/>
        <end position="283"/>
    </location>
</feature>
<feature type="binding site" evidence="1">
    <location>
        <begin position="17"/>
        <end position="24"/>
    </location>
    <ligand>
        <name>GTP</name>
        <dbReference type="ChEBI" id="CHEBI:37565"/>
    </ligand>
</feature>
<feature type="binding site" evidence="1">
    <location>
        <begin position="81"/>
        <end position="85"/>
    </location>
    <ligand>
        <name>GTP</name>
        <dbReference type="ChEBI" id="CHEBI:37565"/>
    </ligand>
</feature>
<feature type="binding site" evidence="1">
    <location>
        <begin position="135"/>
        <end position="138"/>
    </location>
    <ligand>
        <name>GTP</name>
        <dbReference type="ChEBI" id="CHEBI:37565"/>
    </ligand>
</feature>
<proteinExistence type="inferred from homology"/>
<evidence type="ECO:0000255" key="1">
    <source>
        <dbReference type="HAMAP-Rule" id="MF_00054"/>
    </source>
</evidence>
<organism>
    <name type="scientific">Nitrobacter winogradskyi (strain ATCC 25391 / DSM 10237 / CIP 104748 / NCIMB 11846 / Nb-255)</name>
    <dbReference type="NCBI Taxonomy" id="323098"/>
    <lineage>
        <taxon>Bacteria</taxon>
        <taxon>Pseudomonadati</taxon>
        <taxon>Pseudomonadota</taxon>
        <taxon>Alphaproteobacteria</taxon>
        <taxon>Hyphomicrobiales</taxon>
        <taxon>Nitrobacteraceae</taxon>
        <taxon>Nitrobacter</taxon>
    </lineage>
</organism>
<name>EFG_NITWN</name>
<keyword id="KW-0963">Cytoplasm</keyword>
<keyword id="KW-0251">Elongation factor</keyword>
<keyword id="KW-0342">GTP-binding</keyword>
<keyword id="KW-0547">Nucleotide-binding</keyword>
<keyword id="KW-0648">Protein biosynthesis</keyword>
<keyword id="KW-1185">Reference proteome</keyword>
<comment type="function">
    <text evidence="1">Catalyzes the GTP-dependent ribosomal translocation step during translation elongation. During this step, the ribosome changes from the pre-translocational (PRE) to the post-translocational (POST) state as the newly formed A-site-bound peptidyl-tRNA and P-site-bound deacylated tRNA move to the P and E sites, respectively. Catalyzes the coordinated movement of the two tRNA molecules, the mRNA and conformational changes in the ribosome.</text>
</comment>
<comment type="subcellular location">
    <subcellularLocation>
        <location evidence="1">Cytoplasm</location>
    </subcellularLocation>
</comment>
<comment type="similarity">
    <text evidence="1">Belongs to the TRAFAC class translation factor GTPase superfamily. Classic translation factor GTPase family. EF-G/EF-2 subfamily.</text>
</comment>
<gene>
    <name evidence="1" type="primary">fusA</name>
    <name type="ordered locus">Nwi_1361</name>
</gene>
<sequence length="690" mass="75753">MPRQHAIEDYRNFGIMAHIDAGKTTTTERILYYTGKSHKIGEVHEGAATMDWMTQEQERGITITSAATTAFWDGKRLNIIDTPGHVDFTIEVERSLRVLDGAVCVLDSNQGVEPQTETVWRQGDKYKVPRIVFCNKMDKTGADFYKCLADIVDRLGARPVALQLPIGSESNFKGMVDLVRMKALVWNNEALGAMYDIVDIPADLADKAKEYREKLVEAAVELDDDAMAAYLDGAEPDEATLKKLIRKAVLTGAFYPVLCGTAFKNKGVQPLLDAVVAYLPSPLDVPAIKGVDDKGNEVVRHADDKEPMSLLAFKIMDDPFVGTITFCRIYSGILQSGTGVVNSTREKKERIGRMLLMHANNREDIKEAYAGDIVALAGLKEARTGDTLCDPAHQVILEKMEFPDPVIEIAIEPKSKADQEKLGIALAKLAAEDPSFRVSTDQESGQTILKGMGELHLDIKVDILKRTYKVDANIGAPQVAFRERVTKRVEHSYTHKKQTGGTGQFAAVTLIVEPSEPGKGYEFESKIVGGAVPKEYIPGVEKGIESVLSSGVVAGFPVVDVKVQLIDGKFHDVDSSALAFEIATRACFREALQKGKSVLLEPIMKVEVVTPEDYTGSVIGDLNSRRGQIQGQDMRGNANVINAMVPLMNMFGYVNNLRSMSQGRATFTMQFDHYAEAPANVSAEVQKKFA</sequence>